<reference key="1">
    <citation type="journal article" date="1997" name="Nature">
        <title>The nucleotide sequence of Saccharomyces cerevisiae chromosome XII.</title>
        <authorList>
            <person name="Johnston M."/>
            <person name="Hillier L.W."/>
            <person name="Riles L."/>
            <person name="Albermann K."/>
            <person name="Andre B."/>
            <person name="Ansorge W."/>
            <person name="Benes V."/>
            <person name="Brueckner M."/>
            <person name="Delius H."/>
            <person name="Dubois E."/>
            <person name="Duesterhoeft A."/>
            <person name="Entian K.-D."/>
            <person name="Floeth M."/>
            <person name="Goffeau A."/>
            <person name="Hebling U."/>
            <person name="Heumann K."/>
            <person name="Heuss-Neitzel D."/>
            <person name="Hilbert H."/>
            <person name="Hilger F."/>
            <person name="Kleine K."/>
            <person name="Koetter P."/>
            <person name="Louis E.J."/>
            <person name="Messenguy F."/>
            <person name="Mewes H.-W."/>
            <person name="Miosga T."/>
            <person name="Moestl D."/>
            <person name="Mueller-Auer S."/>
            <person name="Nentwich U."/>
            <person name="Obermaier B."/>
            <person name="Piravandi E."/>
            <person name="Pohl T.M."/>
            <person name="Portetelle D."/>
            <person name="Purnelle B."/>
            <person name="Rechmann S."/>
            <person name="Rieger M."/>
            <person name="Rinke M."/>
            <person name="Rose M."/>
            <person name="Scharfe M."/>
            <person name="Scherens B."/>
            <person name="Scholler P."/>
            <person name="Schwager C."/>
            <person name="Schwarz S."/>
            <person name="Underwood A.P."/>
            <person name="Urrestarazu L.A."/>
            <person name="Vandenbol M."/>
            <person name="Verhasselt P."/>
            <person name="Vierendeels F."/>
            <person name="Voet M."/>
            <person name="Volckaert G."/>
            <person name="Voss H."/>
            <person name="Wambutt R."/>
            <person name="Wedler E."/>
            <person name="Wedler H."/>
            <person name="Zimmermann F.K."/>
            <person name="Zollner A."/>
            <person name="Hani J."/>
            <person name="Hoheisel J.D."/>
        </authorList>
    </citation>
    <scope>NUCLEOTIDE SEQUENCE [LARGE SCALE GENOMIC DNA]</scope>
    <source>
        <strain>ATCC 204508 / S288c</strain>
    </source>
</reference>
<reference key="2">
    <citation type="journal article" date="2014" name="G3 (Bethesda)">
        <title>The reference genome sequence of Saccharomyces cerevisiae: Then and now.</title>
        <authorList>
            <person name="Engel S.R."/>
            <person name="Dietrich F.S."/>
            <person name="Fisk D.G."/>
            <person name="Binkley G."/>
            <person name="Balakrishnan R."/>
            <person name="Costanzo M.C."/>
            <person name="Dwight S.S."/>
            <person name="Hitz B.C."/>
            <person name="Karra K."/>
            <person name="Nash R.S."/>
            <person name="Weng S."/>
            <person name="Wong E.D."/>
            <person name="Lloyd P."/>
            <person name="Skrzypek M.S."/>
            <person name="Miyasato S.R."/>
            <person name="Simison M."/>
            <person name="Cherry J.M."/>
        </authorList>
    </citation>
    <scope>GENOME REANNOTATION</scope>
    <source>
        <strain>ATCC 204508 / S288c</strain>
    </source>
</reference>
<reference key="3">
    <citation type="journal article" date="2007" name="Genome Res.">
        <title>Approaching a complete repository of sequence-verified protein-encoding clones for Saccharomyces cerevisiae.</title>
        <authorList>
            <person name="Hu Y."/>
            <person name="Rolfs A."/>
            <person name="Bhullar B."/>
            <person name="Murthy T.V.S."/>
            <person name="Zhu C."/>
            <person name="Berger M.F."/>
            <person name="Camargo A.A."/>
            <person name="Kelley F."/>
            <person name="McCarron S."/>
            <person name="Jepson D."/>
            <person name="Richardson A."/>
            <person name="Raphael J."/>
            <person name="Moreira D."/>
            <person name="Taycher E."/>
            <person name="Zuo D."/>
            <person name="Mohr S."/>
            <person name="Kane M.F."/>
            <person name="Williamson J."/>
            <person name="Simpson A.J.G."/>
            <person name="Bulyk M.L."/>
            <person name="Harlow E."/>
            <person name="Marsischky G."/>
            <person name="Kolodner R.D."/>
            <person name="LaBaer J."/>
        </authorList>
    </citation>
    <scope>NUCLEOTIDE SEQUENCE [GENOMIC DNA]</scope>
    <source>
        <strain>ATCC 204508 / S288c</strain>
    </source>
</reference>
<evidence type="ECO:0000255" key="1"/>
<evidence type="ECO:0000305" key="2"/>
<evidence type="ECO:0000305" key="3">
    <source>
    </source>
</evidence>
<proteinExistence type="uncertain"/>
<protein>
    <recommendedName>
        <fullName>Putative uncharacterized protein YLR334C</fullName>
    </recommendedName>
</protein>
<keyword id="KW-0472">Membrane</keyword>
<keyword id="KW-0812">Transmembrane</keyword>
<keyword id="KW-1133">Transmembrane helix</keyword>
<name>YL334_YEAST</name>
<comment type="subcellular location">
    <subcellularLocation>
        <location evidence="2">Membrane</location>
        <topology evidence="2">Multi-pass membrane protein</topology>
    </subcellularLocation>
</comment>
<comment type="caution">
    <text evidence="3">Product of a dubious gene prediction unlikely to encode a functional protein. Because of that it is not part of the S.cerevisiae S288c complete/reference proteome set.</text>
</comment>
<accession>Q06127</accession>
<sequence>MDNLIIAGILLLIKAMIFCIVNILEVLLEDIGILKSLFLHNAITIISSSVLYFLLSYYIINPRISASIIFDDCFSIFMLSSYTVCDDILITRILNKQMMLQFHPIRTIIKLLQHFPVKSSPNAHTA</sequence>
<gene>
    <name type="ordered locus">YLR334C</name>
    <name type="ORF">L8300.11</name>
</gene>
<feature type="chain" id="PRO_0000299637" description="Putative uncharacterized protein YLR334C">
    <location>
        <begin position="1"/>
        <end position="126"/>
    </location>
</feature>
<feature type="transmembrane region" description="Helical" evidence="1">
    <location>
        <begin position="4"/>
        <end position="24"/>
    </location>
</feature>
<feature type="transmembrane region" description="Helical" evidence="1">
    <location>
        <begin position="42"/>
        <end position="62"/>
    </location>
</feature>
<feature type="transmembrane region" description="Helical" evidence="1">
    <location>
        <begin position="64"/>
        <end position="84"/>
    </location>
</feature>
<dbReference type="EMBL" id="U19028">
    <property type="protein sequence ID" value="AAB67261.1"/>
    <property type="molecule type" value="Genomic_DNA"/>
</dbReference>
<dbReference type="EMBL" id="AY693243">
    <property type="protein sequence ID" value="AAT93262.1"/>
    <property type="molecule type" value="Genomic_DNA"/>
</dbReference>
<dbReference type="PIR" id="S51339">
    <property type="entry name" value="S51339"/>
</dbReference>
<dbReference type="DIP" id="DIP-4104N"/>
<dbReference type="STRING" id="4932.YLR334C"/>
<dbReference type="PaxDb" id="4932-YLR334C"/>
<dbReference type="EnsemblFungi" id="YLR334C_mRNA">
    <property type="protein sequence ID" value="YLR334C"/>
    <property type="gene ID" value="YLR334C"/>
</dbReference>
<dbReference type="AGR" id="SGD:S000004326"/>
<dbReference type="SGD" id="S000004326">
    <property type="gene designation" value="YLR334C"/>
</dbReference>
<dbReference type="GeneTree" id="ENSGT00940000177947"/>
<dbReference type="HOGENOM" id="CLU_1983321_0_0_1"/>
<dbReference type="GO" id="GO:0016020">
    <property type="term" value="C:membrane"/>
    <property type="evidence" value="ECO:0007669"/>
    <property type="project" value="UniProtKB-SubCell"/>
</dbReference>
<organism>
    <name type="scientific">Saccharomyces cerevisiae (strain ATCC 204508 / S288c)</name>
    <name type="common">Baker's yeast</name>
    <dbReference type="NCBI Taxonomy" id="559292"/>
    <lineage>
        <taxon>Eukaryota</taxon>
        <taxon>Fungi</taxon>
        <taxon>Dikarya</taxon>
        <taxon>Ascomycota</taxon>
        <taxon>Saccharomycotina</taxon>
        <taxon>Saccharomycetes</taxon>
        <taxon>Saccharomycetales</taxon>
        <taxon>Saccharomycetaceae</taxon>
        <taxon>Saccharomyces</taxon>
    </lineage>
</organism>